<reference key="1">
    <citation type="journal article" date="2011" name="PLoS Genet.">
        <title>Genome sequencing and comparative transcriptomics of the model entomopathogenic fungi Metarhizium anisopliae and M. acridum.</title>
        <authorList>
            <person name="Gao Q."/>
            <person name="Jin K."/>
            <person name="Ying S.-H."/>
            <person name="Zhang Y."/>
            <person name="Xiao G."/>
            <person name="Shang Y."/>
            <person name="Duan Z."/>
            <person name="Hu X."/>
            <person name="Xie X.-Q."/>
            <person name="Zhou G."/>
            <person name="Peng G."/>
            <person name="Luo Z."/>
            <person name="Huang W."/>
            <person name="Wang B."/>
            <person name="Fang W."/>
            <person name="Wang S."/>
            <person name="Zhong Y."/>
            <person name="Ma L.-J."/>
            <person name="St Leger R.J."/>
            <person name="Zhao G.-P."/>
            <person name="Pei Y."/>
            <person name="Feng M.-G."/>
            <person name="Xia Y."/>
            <person name="Wang C."/>
        </authorList>
    </citation>
    <scope>NUCLEOTIDE SEQUENCE [LARGE SCALE GENOMIC DNA]</scope>
    <source>
        <strain>ARSEF 23 / ATCC MYA-3075</strain>
    </source>
</reference>
<reference key="2">
    <citation type="journal article" date="2014" name="Proc. Natl. Acad. Sci. U.S.A.">
        <title>Trajectory and genomic determinants of fungal-pathogen speciation and host adaptation.</title>
        <authorList>
            <person name="Hu X."/>
            <person name="Xiao G."/>
            <person name="Zheng P."/>
            <person name="Shang Y."/>
            <person name="Su Y."/>
            <person name="Zhang X."/>
            <person name="Liu X."/>
            <person name="Zhan S."/>
            <person name="St Leger R.J."/>
            <person name="Wang C."/>
        </authorList>
    </citation>
    <scope>GENOME REANNOTATION</scope>
    <source>
        <strain>ARSEF 23 / ATCC MYA-3075</strain>
    </source>
</reference>
<proteinExistence type="inferred from homology"/>
<sequence>MKAYMYDNQPGDQRLPHDSGRAISTEALGKLGVLYFHFANIADVDRLAADRGYKNRDEITVSPEKMGGMYEDKVKMFFNEHLHEDEEIRYIKGGQGFFDVRSKDDNWVRVRLEKDDLLILPAGIYHRFTTDEANVPVPRIVRTCHEALQGRAQMDAIE</sequence>
<accession>E9EUE8</accession>
<protein>
    <recommendedName>
        <fullName evidence="1">Acireductone dioxygenase</fullName>
    </recommendedName>
    <alternativeName>
        <fullName evidence="1">Acireductone dioxygenase (Fe(2+)-requiring)</fullName>
        <shortName evidence="1">ARD'</shortName>
        <shortName evidence="1">Fe-ARD</shortName>
        <ecNumber evidence="1">1.13.11.54</ecNumber>
    </alternativeName>
    <alternativeName>
        <fullName evidence="1">Acireductone dioxygenase (Ni(2+)-requiring)</fullName>
        <shortName evidence="1">ARD</shortName>
        <shortName evidence="1">Ni-ARD</shortName>
        <ecNumber evidence="1">1.13.11.53</ecNumber>
    </alternativeName>
</protein>
<organism>
    <name type="scientific">Metarhizium robertsii (strain ARSEF 23 / ATCC MYA-3075)</name>
    <name type="common">Metarhizium anisopliae (strain ARSEF 23)</name>
    <dbReference type="NCBI Taxonomy" id="655844"/>
    <lineage>
        <taxon>Eukaryota</taxon>
        <taxon>Fungi</taxon>
        <taxon>Dikarya</taxon>
        <taxon>Ascomycota</taxon>
        <taxon>Pezizomycotina</taxon>
        <taxon>Sordariomycetes</taxon>
        <taxon>Hypocreomycetidae</taxon>
        <taxon>Hypocreales</taxon>
        <taxon>Clavicipitaceae</taxon>
        <taxon>Metarhizium</taxon>
    </lineage>
</organism>
<feature type="chain" id="PRO_0000414360" description="Acireductone dioxygenase">
    <location>
        <begin position="1"/>
        <end position="158"/>
    </location>
</feature>
<feature type="binding site" evidence="1">
    <location>
        <position position="81"/>
    </location>
    <ligand>
        <name>Fe(2+)</name>
        <dbReference type="ChEBI" id="CHEBI:29033"/>
        <note>for iron-dependent acireductone dioxygenase activity</note>
    </ligand>
</feature>
<feature type="binding site" evidence="1">
    <location>
        <position position="81"/>
    </location>
    <ligand>
        <name>Ni(2+)</name>
        <dbReference type="ChEBI" id="CHEBI:49786"/>
        <note>for nickel-dependent acireductone dioxygenase activity</note>
    </ligand>
</feature>
<feature type="binding site" evidence="1">
    <location>
        <position position="83"/>
    </location>
    <ligand>
        <name>Fe(2+)</name>
        <dbReference type="ChEBI" id="CHEBI:29033"/>
        <note>for iron-dependent acireductone dioxygenase activity</note>
    </ligand>
</feature>
<feature type="binding site" evidence="1">
    <location>
        <position position="83"/>
    </location>
    <ligand>
        <name>Ni(2+)</name>
        <dbReference type="ChEBI" id="CHEBI:49786"/>
        <note>for nickel-dependent acireductone dioxygenase activity</note>
    </ligand>
</feature>
<feature type="binding site" evidence="1">
    <location>
        <position position="87"/>
    </location>
    <ligand>
        <name>Fe(2+)</name>
        <dbReference type="ChEBI" id="CHEBI:29033"/>
        <note>for iron-dependent acireductone dioxygenase activity</note>
    </ligand>
</feature>
<feature type="binding site" evidence="1">
    <location>
        <position position="87"/>
    </location>
    <ligand>
        <name>Ni(2+)</name>
        <dbReference type="ChEBI" id="CHEBI:49786"/>
        <note>for nickel-dependent acireductone dioxygenase activity</note>
    </ligand>
</feature>
<feature type="binding site" evidence="1">
    <location>
        <position position="126"/>
    </location>
    <ligand>
        <name>Fe(2+)</name>
        <dbReference type="ChEBI" id="CHEBI:29033"/>
        <note>for iron-dependent acireductone dioxygenase activity</note>
    </ligand>
</feature>
<feature type="binding site" evidence="1">
    <location>
        <position position="126"/>
    </location>
    <ligand>
        <name>Ni(2+)</name>
        <dbReference type="ChEBI" id="CHEBI:49786"/>
        <note>for nickel-dependent acireductone dioxygenase activity</note>
    </ligand>
</feature>
<comment type="function">
    <text evidence="1">Catalyzes 2 different reactions between oxygen and the acireductone 1,2-dihydroxy-3-keto-5-methylthiopentene (DHK-MTPene) depending upon the metal bound in the active site. Fe-containing acireductone dioxygenase (Fe-ARD) produces formate and 2-keto-4-methylthiobutyrate (KMTB), the alpha-ketoacid precursor of methionine in the methionine recycle pathway. Ni-containing acireductone dioxygenase (Ni-ARD) produces methylthiopropionate, carbon monoxide and formate, and does not lie on the methionine recycle pathway.</text>
</comment>
<comment type="catalytic activity">
    <reaction evidence="1">
        <text>1,2-dihydroxy-5-(methylsulfanyl)pent-1-en-3-one + O2 = 4-methylsulfanyl-2-oxobutanoate + formate + 2 H(+)</text>
        <dbReference type="Rhea" id="RHEA:24504"/>
        <dbReference type="ChEBI" id="CHEBI:15378"/>
        <dbReference type="ChEBI" id="CHEBI:15379"/>
        <dbReference type="ChEBI" id="CHEBI:15740"/>
        <dbReference type="ChEBI" id="CHEBI:16723"/>
        <dbReference type="ChEBI" id="CHEBI:49252"/>
        <dbReference type="EC" id="1.13.11.54"/>
    </reaction>
</comment>
<comment type="catalytic activity">
    <reaction evidence="1">
        <text>1,2-dihydroxy-5-(methylsulfanyl)pent-1-en-3-one + O2 = 3-(methylsulfanyl)propanoate + CO + formate + 2 H(+)</text>
        <dbReference type="Rhea" id="RHEA:14161"/>
        <dbReference type="ChEBI" id="CHEBI:15378"/>
        <dbReference type="ChEBI" id="CHEBI:15379"/>
        <dbReference type="ChEBI" id="CHEBI:15740"/>
        <dbReference type="ChEBI" id="CHEBI:17245"/>
        <dbReference type="ChEBI" id="CHEBI:49016"/>
        <dbReference type="ChEBI" id="CHEBI:49252"/>
        <dbReference type="EC" id="1.13.11.53"/>
    </reaction>
</comment>
<comment type="cofactor">
    <cofactor evidence="1">
        <name>Fe(2+)</name>
        <dbReference type="ChEBI" id="CHEBI:29033"/>
    </cofactor>
    <cofactor evidence="1">
        <name>Ni(2+)</name>
        <dbReference type="ChEBI" id="CHEBI:49786"/>
    </cofactor>
    <text evidence="1">Binds either 1 Fe or Ni cation per monomer. Iron-binding promotes an acireductone dioxygenase reaction producing 2-keto-4-methylthiobutyrate, while nickel-binding promotes an acireductone dioxygenase reaction producing 3-(methylsulfanyl)propanoate.</text>
</comment>
<comment type="pathway">
    <text evidence="1">Amino-acid biosynthesis; L-methionine biosynthesis via salvage pathway; L-methionine from S-methyl-5-thio-alpha-D-ribose 1-phosphate: step 5/6.</text>
</comment>
<comment type="subcellular location">
    <subcellularLocation>
        <location evidence="1">Cytoplasm</location>
    </subcellularLocation>
    <subcellularLocation>
        <location evidence="1">Nucleus</location>
    </subcellularLocation>
</comment>
<comment type="similarity">
    <text evidence="1">Belongs to the acireductone dioxygenase (ARD) family.</text>
</comment>
<dbReference type="EC" id="1.13.11.54" evidence="1"/>
<dbReference type="EC" id="1.13.11.53" evidence="1"/>
<dbReference type="EMBL" id="ADNJ02000003">
    <property type="protein sequence ID" value="EFZ01051.2"/>
    <property type="molecule type" value="Genomic_DNA"/>
</dbReference>
<dbReference type="RefSeq" id="XP_007819836.2">
    <property type="nucleotide sequence ID" value="XM_007821645.2"/>
</dbReference>
<dbReference type="SMR" id="E9EUE8"/>
<dbReference type="GeneID" id="19257933"/>
<dbReference type="KEGG" id="maj:MAA_03647"/>
<dbReference type="HOGENOM" id="CLU_090154_1_1_1"/>
<dbReference type="OrthoDB" id="1867259at2759"/>
<dbReference type="UniPathway" id="UPA00904">
    <property type="reaction ID" value="UER00878"/>
</dbReference>
<dbReference type="Proteomes" id="UP000002498">
    <property type="component" value="Unassembled WGS sequence"/>
</dbReference>
<dbReference type="GO" id="GO:0005737">
    <property type="term" value="C:cytoplasm"/>
    <property type="evidence" value="ECO:0007669"/>
    <property type="project" value="UniProtKB-SubCell"/>
</dbReference>
<dbReference type="GO" id="GO:0005634">
    <property type="term" value="C:nucleus"/>
    <property type="evidence" value="ECO:0007669"/>
    <property type="project" value="UniProtKB-SubCell"/>
</dbReference>
<dbReference type="GO" id="GO:0010308">
    <property type="term" value="F:acireductone dioxygenase (Ni2+-requiring) activity"/>
    <property type="evidence" value="ECO:0007669"/>
    <property type="project" value="UniProtKB-UniRule"/>
</dbReference>
<dbReference type="GO" id="GO:0010309">
    <property type="term" value="F:acireductone dioxygenase [iron(II)-requiring] activity"/>
    <property type="evidence" value="ECO:0007669"/>
    <property type="project" value="UniProtKB-UniRule"/>
</dbReference>
<dbReference type="GO" id="GO:0005506">
    <property type="term" value="F:iron ion binding"/>
    <property type="evidence" value="ECO:0007669"/>
    <property type="project" value="UniProtKB-UniRule"/>
</dbReference>
<dbReference type="GO" id="GO:0016151">
    <property type="term" value="F:nickel cation binding"/>
    <property type="evidence" value="ECO:0007669"/>
    <property type="project" value="UniProtKB-UniRule"/>
</dbReference>
<dbReference type="GO" id="GO:0019509">
    <property type="term" value="P:L-methionine salvage from methylthioadenosine"/>
    <property type="evidence" value="ECO:0007669"/>
    <property type="project" value="UniProtKB-UniRule"/>
</dbReference>
<dbReference type="CDD" id="cd02232">
    <property type="entry name" value="cupin_ARD"/>
    <property type="match status" value="1"/>
</dbReference>
<dbReference type="Gene3D" id="2.60.120.10">
    <property type="entry name" value="Jelly Rolls"/>
    <property type="match status" value="1"/>
</dbReference>
<dbReference type="HAMAP" id="MF_03154">
    <property type="entry name" value="Salvage_MtnD_euk"/>
    <property type="match status" value="1"/>
</dbReference>
<dbReference type="InterPro" id="IPR004313">
    <property type="entry name" value="ARD"/>
</dbReference>
<dbReference type="InterPro" id="IPR027496">
    <property type="entry name" value="ARD_euk"/>
</dbReference>
<dbReference type="InterPro" id="IPR014710">
    <property type="entry name" value="RmlC-like_jellyroll"/>
</dbReference>
<dbReference type="InterPro" id="IPR011051">
    <property type="entry name" value="RmlC_Cupin_sf"/>
</dbReference>
<dbReference type="PANTHER" id="PTHR23418">
    <property type="entry name" value="ACIREDUCTONE DIOXYGENASE"/>
    <property type="match status" value="1"/>
</dbReference>
<dbReference type="PANTHER" id="PTHR23418:SF0">
    <property type="entry name" value="ACIREDUCTONE DIOXYGENASE"/>
    <property type="match status" value="1"/>
</dbReference>
<dbReference type="Pfam" id="PF03079">
    <property type="entry name" value="ARD"/>
    <property type="match status" value="1"/>
</dbReference>
<dbReference type="SUPFAM" id="SSF51182">
    <property type="entry name" value="RmlC-like cupins"/>
    <property type="match status" value="1"/>
</dbReference>
<name>MTND_METRA</name>
<gene>
    <name evidence="1" type="primary">ADI1</name>
    <name type="ORF">MAA_03647</name>
</gene>
<evidence type="ECO:0000255" key="1">
    <source>
        <dbReference type="HAMAP-Rule" id="MF_03154"/>
    </source>
</evidence>
<keyword id="KW-0028">Amino-acid biosynthesis</keyword>
<keyword id="KW-0963">Cytoplasm</keyword>
<keyword id="KW-0223">Dioxygenase</keyword>
<keyword id="KW-0408">Iron</keyword>
<keyword id="KW-0479">Metal-binding</keyword>
<keyword id="KW-0486">Methionine biosynthesis</keyword>
<keyword id="KW-0533">Nickel</keyword>
<keyword id="KW-0539">Nucleus</keyword>
<keyword id="KW-0560">Oxidoreductase</keyword>